<organism>
    <name type="scientific">Bacillus cereus (strain AH187)</name>
    <dbReference type="NCBI Taxonomy" id="405534"/>
    <lineage>
        <taxon>Bacteria</taxon>
        <taxon>Bacillati</taxon>
        <taxon>Bacillota</taxon>
        <taxon>Bacilli</taxon>
        <taxon>Bacillales</taxon>
        <taxon>Bacillaceae</taxon>
        <taxon>Bacillus</taxon>
        <taxon>Bacillus cereus group</taxon>
    </lineage>
</organism>
<reference key="1">
    <citation type="submission" date="2008-10" db="EMBL/GenBank/DDBJ databases">
        <title>Genome sequence of Bacillus cereus AH187.</title>
        <authorList>
            <person name="Dodson R.J."/>
            <person name="Durkin A.S."/>
            <person name="Rosovitz M.J."/>
            <person name="Rasko D.A."/>
            <person name="Kolsto A.B."/>
            <person name="Okstad O.A."/>
            <person name="Ravel J."/>
            <person name="Sutton G."/>
        </authorList>
    </citation>
    <scope>NUCLEOTIDE SEQUENCE [LARGE SCALE GENOMIC DNA]</scope>
    <source>
        <strain>AH187</strain>
    </source>
</reference>
<feature type="chain" id="PRO_1000116618" description="UDP-N-acetylmuramate--L-alanine ligase">
    <location>
        <begin position="1"/>
        <end position="436"/>
    </location>
</feature>
<feature type="binding site" evidence="1">
    <location>
        <begin position="108"/>
        <end position="114"/>
    </location>
    <ligand>
        <name>ATP</name>
        <dbReference type="ChEBI" id="CHEBI:30616"/>
    </ligand>
</feature>
<accession>B7HSM3</accession>
<sequence length="436" mass="49229">MTVYHFVGIKGTGMSSLAQILHDMKHTVQGSDYEKRFFTQTALEKRSISILPFDKSNVKEGQVIIAGNAFPDTHEEIVAAKELNIPVHRYHHFLGDLMNQYTSVAVTGAHGKTSTTGLLAHVMQGAHPTSYLIGDGTGHGVENSKYFVFEACEYRRHFLSYNPDYAIMTNIDFDHPDYFTDINDVFSAFQEMALQVKKGIIACGDDEELQKIQAKVPVIFYGFGEDNDFQARNIQKRTDGTIFDVFVRNTYYDTFKITGYGNHSVLNALAVIALCHYENVDVEAVKHQLTTFEGVKRRFNEKPMGEQVIIDDYAHHPTEINATIEAARQKHPEREIVAVFQPHTFSRTEKFLDEFAESLSKADQVYLCDIFGSARENKGELTIEDLQKRIDGAELITDTTTDVLKKHKNGVLIFMGAGDIQKFEAAYVKEVQVAEK</sequence>
<gene>
    <name evidence="1" type="primary">murC</name>
    <name type="ordered locus">BCAH187_A4821</name>
</gene>
<protein>
    <recommendedName>
        <fullName evidence="1">UDP-N-acetylmuramate--L-alanine ligase</fullName>
        <ecNumber evidence="1">6.3.2.8</ecNumber>
    </recommendedName>
    <alternativeName>
        <fullName evidence="1">UDP-N-acetylmuramoyl-L-alanine synthetase</fullName>
    </alternativeName>
</protein>
<proteinExistence type="inferred from homology"/>
<comment type="function">
    <text evidence="1">Cell wall formation.</text>
</comment>
<comment type="catalytic activity">
    <reaction evidence="1">
        <text>UDP-N-acetyl-alpha-D-muramate + L-alanine + ATP = UDP-N-acetyl-alpha-D-muramoyl-L-alanine + ADP + phosphate + H(+)</text>
        <dbReference type="Rhea" id="RHEA:23372"/>
        <dbReference type="ChEBI" id="CHEBI:15378"/>
        <dbReference type="ChEBI" id="CHEBI:30616"/>
        <dbReference type="ChEBI" id="CHEBI:43474"/>
        <dbReference type="ChEBI" id="CHEBI:57972"/>
        <dbReference type="ChEBI" id="CHEBI:70757"/>
        <dbReference type="ChEBI" id="CHEBI:83898"/>
        <dbReference type="ChEBI" id="CHEBI:456216"/>
        <dbReference type="EC" id="6.3.2.8"/>
    </reaction>
</comment>
<comment type="pathway">
    <text evidence="1">Cell wall biogenesis; peptidoglycan biosynthesis.</text>
</comment>
<comment type="subcellular location">
    <subcellularLocation>
        <location evidence="1">Cytoplasm</location>
    </subcellularLocation>
</comment>
<comment type="similarity">
    <text evidence="1">Belongs to the MurCDEF family.</text>
</comment>
<keyword id="KW-0067">ATP-binding</keyword>
<keyword id="KW-0131">Cell cycle</keyword>
<keyword id="KW-0132">Cell division</keyword>
<keyword id="KW-0133">Cell shape</keyword>
<keyword id="KW-0961">Cell wall biogenesis/degradation</keyword>
<keyword id="KW-0963">Cytoplasm</keyword>
<keyword id="KW-0436">Ligase</keyword>
<keyword id="KW-0547">Nucleotide-binding</keyword>
<keyword id="KW-0573">Peptidoglycan synthesis</keyword>
<evidence type="ECO:0000255" key="1">
    <source>
        <dbReference type="HAMAP-Rule" id="MF_00046"/>
    </source>
</evidence>
<name>MURC_BACC7</name>
<dbReference type="EC" id="6.3.2.8" evidence="1"/>
<dbReference type="EMBL" id="CP001177">
    <property type="protein sequence ID" value="ACJ81188.1"/>
    <property type="molecule type" value="Genomic_DNA"/>
</dbReference>
<dbReference type="SMR" id="B7HSM3"/>
<dbReference type="KEGG" id="bcr:BCAH187_A4821"/>
<dbReference type="HOGENOM" id="CLU_028104_1_0_9"/>
<dbReference type="UniPathway" id="UPA00219"/>
<dbReference type="Proteomes" id="UP000002214">
    <property type="component" value="Chromosome"/>
</dbReference>
<dbReference type="GO" id="GO:0005737">
    <property type="term" value="C:cytoplasm"/>
    <property type="evidence" value="ECO:0007669"/>
    <property type="project" value="UniProtKB-SubCell"/>
</dbReference>
<dbReference type="GO" id="GO:0005524">
    <property type="term" value="F:ATP binding"/>
    <property type="evidence" value="ECO:0007669"/>
    <property type="project" value="UniProtKB-UniRule"/>
</dbReference>
<dbReference type="GO" id="GO:0008763">
    <property type="term" value="F:UDP-N-acetylmuramate-L-alanine ligase activity"/>
    <property type="evidence" value="ECO:0007669"/>
    <property type="project" value="UniProtKB-UniRule"/>
</dbReference>
<dbReference type="GO" id="GO:0051301">
    <property type="term" value="P:cell division"/>
    <property type="evidence" value="ECO:0007669"/>
    <property type="project" value="UniProtKB-KW"/>
</dbReference>
<dbReference type="GO" id="GO:0071555">
    <property type="term" value="P:cell wall organization"/>
    <property type="evidence" value="ECO:0007669"/>
    <property type="project" value="UniProtKB-KW"/>
</dbReference>
<dbReference type="GO" id="GO:0009252">
    <property type="term" value="P:peptidoglycan biosynthetic process"/>
    <property type="evidence" value="ECO:0007669"/>
    <property type="project" value="UniProtKB-UniRule"/>
</dbReference>
<dbReference type="GO" id="GO:0008360">
    <property type="term" value="P:regulation of cell shape"/>
    <property type="evidence" value="ECO:0007669"/>
    <property type="project" value="UniProtKB-KW"/>
</dbReference>
<dbReference type="Gene3D" id="3.90.190.20">
    <property type="entry name" value="Mur ligase, C-terminal domain"/>
    <property type="match status" value="1"/>
</dbReference>
<dbReference type="Gene3D" id="3.40.1190.10">
    <property type="entry name" value="Mur-like, catalytic domain"/>
    <property type="match status" value="1"/>
</dbReference>
<dbReference type="Gene3D" id="3.40.50.720">
    <property type="entry name" value="NAD(P)-binding Rossmann-like Domain"/>
    <property type="match status" value="1"/>
</dbReference>
<dbReference type="HAMAP" id="MF_00046">
    <property type="entry name" value="MurC"/>
    <property type="match status" value="1"/>
</dbReference>
<dbReference type="InterPro" id="IPR036565">
    <property type="entry name" value="Mur-like_cat_sf"/>
</dbReference>
<dbReference type="InterPro" id="IPR004101">
    <property type="entry name" value="Mur_ligase_C"/>
</dbReference>
<dbReference type="InterPro" id="IPR036615">
    <property type="entry name" value="Mur_ligase_C_dom_sf"/>
</dbReference>
<dbReference type="InterPro" id="IPR013221">
    <property type="entry name" value="Mur_ligase_cen"/>
</dbReference>
<dbReference type="InterPro" id="IPR000713">
    <property type="entry name" value="Mur_ligase_N"/>
</dbReference>
<dbReference type="InterPro" id="IPR050061">
    <property type="entry name" value="MurCDEF_pg_biosynth"/>
</dbReference>
<dbReference type="InterPro" id="IPR005758">
    <property type="entry name" value="UDP-N-AcMur_Ala_ligase_MurC"/>
</dbReference>
<dbReference type="NCBIfam" id="TIGR01082">
    <property type="entry name" value="murC"/>
    <property type="match status" value="1"/>
</dbReference>
<dbReference type="PANTHER" id="PTHR43445:SF3">
    <property type="entry name" value="UDP-N-ACETYLMURAMATE--L-ALANINE LIGASE"/>
    <property type="match status" value="1"/>
</dbReference>
<dbReference type="PANTHER" id="PTHR43445">
    <property type="entry name" value="UDP-N-ACETYLMURAMATE--L-ALANINE LIGASE-RELATED"/>
    <property type="match status" value="1"/>
</dbReference>
<dbReference type="Pfam" id="PF01225">
    <property type="entry name" value="Mur_ligase"/>
    <property type="match status" value="1"/>
</dbReference>
<dbReference type="Pfam" id="PF02875">
    <property type="entry name" value="Mur_ligase_C"/>
    <property type="match status" value="1"/>
</dbReference>
<dbReference type="Pfam" id="PF08245">
    <property type="entry name" value="Mur_ligase_M"/>
    <property type="match status" value="1"/>
</dbReference>
<dbReference type="SUPFAM" id="SSF51984">
    <property type="entry name" value="MurCD N-terminal domain"/>
    <property type="match status" value="1"/>
</dbReference>
<dbReference type="SUPFAM" id="SSF53623">
    <property type="entry name" value="MurD-like peptide ligases, catalytic domain"/>
    <property type="match status" value="1"/>
</dbReference>
<dbReference type="SUPFAM" id="SSF53244">
    <property type="entry name" value="MurD-like peptide ligases, peptide-binding domain"/>
    <property type="match status" value="1"/>
</dbReference>